<keyword id="KW-0067">ATP-binding</keyword>
<keyword id="KW-0436">Ligase</keyword>
<keyword id="KW-0479">Metal-binding</keyword>
<keyword id="KW-0547">Nucleotide-binding</keyword>
<keyword id="KW-0671">Queuosine biosynthesis</keyword>
<keyword id="KW-0862">Zinc</keyword>
<accession>A8GVR7</accession>
<evidence type="ECO:0000255" key="1">
    <source>
        <dbReference type="HAMAP-Rule" id="MF_01633"/>
    </source>
</evidence>
<sequence>MKKAVILVSGGADSATVLAIMREQGYEIHAISFNYGQRNNAELRKVTELVKEYNVKQHKIVNIDLRAFGGSALTDDDIKVPHYHDTKELPEDVPVTYVPARNTIFLSYALGFAEIIGAKDIFIGVHTSDSANYPDCRPEYIKSFEAMANLATNIGGVTIHTPLINMTKDQIIKTGLRLGVDYKNTISCYDPSEDDLSCGTCLACTIRLDAFKKNNVQDPINYILF</sequence>
<protein>
    <recommendedName>
        <fullName evidence="1">7-cyano-7-deazaguanine synthase</fullName>
        <ecNumber evidence="1">6.3.4.20</ecNumber>
    </recommendedName>
    <alternativeName>
        <fullName evidence="1">7-cyano-7-carbaguanine synthase</fullName>
    </alternativeName>
    <alternativeName>
        <fullName evidence="1">PreQ(0) synthase</fullName>
    </alternativeName>
    <alternativeName>
        <fullName evidence="1">Queuosine biosynthesis protein QueC</fullName>
    </alternativeName>
</protein>
<comment type="function">
    <text evidence="1">Catalyzes the ATP-dependent conversion of 7-carboxy-7-deazaguanine (CDG) to 7-cyano-7-deazaguanine (preQ(0)).</text>
</comment>
<comment type="catalytic activity">
    <reaction evidence="1">
        <text>7-carboxy-7-deazaguanine + NH4(+) + ATP = 7-cyano-7-deazaguanine + ADP + phosphate + H2O + H(+)</text>
        <dbReference type="Rhea" id="RHEA:27982"/>
        <dbReference type="ChEBI" id="CHEBI:15377"/>
        <dbReference type="ChEBI" id="CHEBI:15378"/>
        <dbReference type="ChEBI" id="CHEBI:28938"/>
        <dbReference type="ChEBI" id="CHEBI:30616"/>
        <dbReference type="ChEBI" id="CHEBI:43474"/>
        <dbReference type="ChEBI" id="CHEBI:45075"/>
        <dbReference type="ChEBI" id="CHEBI:61036"/>
        <dbReference type="ChEBI" id="CHEBI:456216"/>
        <dbReference type="EC" id="6.3.4.20"/>
    </reaction>
</comment>
<comment type="cofactor">
    <cofactor evidence="1">
        <name>Zn(2+)</name>
        <dbReference type="ChEBI" id="CHEBI:29105"/>
    </cofactor>
    <text evidence="1">Binds 1 zinc ion per subunit.</text>
</comment>
<comment type="pathway">
    <text evidence="1">Purine metabolism; 7-cyano-7-deazaguanine biosynthesis.</text>
</comment>
<comment type="similarity">
    <text evidence="1">Belongs to the QueC family.</text>
</comment>
<name>QUEC_RICB8</name>
<gene>
    <name evidence="1" type="primary">queC</name>
    <name type="ordered locus">A1I_02865</name>
</gene>
<reference key="1">
    <citation type="submission" date="2007-09" db="EMBL/GenBank/DDBJ databases">
        <title>Complete genome sequencing of Rickettsia bellii.</title>
        <authorList>
            <person name="Madan A."/>
            <person name="Lee H."/>
            <person name="Madan A."/>
            <person name="Yoon J.-G."/>
            <person name="Ryu G.-Y."/>
            <person name="Dasch G."/>
            <person name="Ereemeva M."/>
        </authorList>
    </citation>
    <scope>NUCLEOTIDE SEQUENCE [LARGE SCALE GENOMIC DNA]</scope>
    <source>
        <strain>OSU 85-389</strain>
    </source>
</reference>
<proteinExistence type="inferred from homology"/>
<organism>
    <name type="scientific">Rickettsia bellii (strain OSU 85-389)</name>
    <dbReference type="NCBI Taxonomy" id="391896"/>
    <lineage>
        <taxon>Bacteria</taxon>
        <taxon>Pseudomonadati</taxon>
        <taxon>Pseudomonadota</taxon>
        <taxon>Alphaproteobacteria</taxon>
        <taxon>Rickettsiales</taxon>
        <taxon>Rickettsiaceae</taxon>
        <taxon>Rickettsieae</taxon>
        <taxon>Rickettsia</taxon>
        <taxon>belli group</taxon>
    </lineage>
</organism>
<feature type="chain" id="PRO_1000069795" description="7-cyano-7-deazaguanine synthase">
    <location>
        <begin position="1"/>
        <end position="225"/>
    </location>
</feature>
<feature type="binding site" evidence="1">
    <location>
        <begin position="8"/>
        <end position="18"/>
    </location>
    <ligand>
        <name>ATP</name>
        <dbReference type="ChEBI" id="CHEBI:30616"/>
    </ligand>
</feature>
<feature type="binding site" evidence="1">
    <location>
        <position position="188"/>
    </location>
    <ligand>
        <name>Zn(2+)</name>
        <dbReference type="ChEBI" id="CHEBI:29105"/>
    </ligand>
</feature>
<feature type="binding site" evidence="1">
    <location>
        <position position="198"/>
    </location>
    <ligand>
        <name>Zn(2+)</name>
        <dbReference type="ChEBI" id="CHEBI:29105"/>
    </ligand>
</feature>
<feature type="binding site" evidence="1">
    <location>
        <position position="201"/>
    </location>
    <ligand>
        <name>Zn(2+)</name>
        <dbReference type="ChEBI" id="CHEBI:29105"/>
    </ligand>
</feature>
<feature type="binding site" evidence="1">
    <location>
        <position position="204"/>
    </location>
    <ligand>
        <name>Zn(2+)</name>
        <dbReference type="ChEBI" id="CHEBI:29105"/>
    </ligand>
</feature>
<dbReference type="EC" id="6.3.4.20" evidence="1"/>
<dbReference type="EMBL" id="CP000849">
    <property type="protein sequence ID" value="ABV78944.1"/>
    <property type="molecule type" value="Genomic_DNA"/>
</dbReference>
<dbReference type="RefSeq" id="WP_011477168.1">
    <property type="nucleotide sequence ID" value="NC_009883.1"/>
</dbReference>
<dbReference type="SMR" id="A8GVR7"/>
<dbReference type="KEGG" id="rbo:A1I_02865"/>
<dbReference type="HOGENOM" id="CLU_081854_1_1_5"/>
<dbReference type="UniPathway" id="UPA00391"/>
<dbReference type="GO" id="GO:0005524">
    <property type="term" value="F:ATP binding"/>
    <property type="evidence" value="ECO:0007669"/>
    <property type="project" value="UniProtKB-UniRule"/>
</dbReference>
<dbReference type="GO" id="GO:0016879">
    <property type="term" value="F:ligase activity, forming carbon-nitrogen bonds"/>
    <property type="evidence" value="ECO:0007669"/>
    <property type="project" value="UniProtKB-UniRule"/>
</dbReference>
<dbReference type="GO" id="GO:0008270">
    <property type="term" value="F:zinc ion binding"/>
    <property type="evidence" value="ECO:0007669"/>
    <property type="project" value="UniProtKB-UniRule"/>
</dbReference>
<dbReference type="GO" id="GO:0008616">
    <property type="term" value="P:queuosine biosynthetic process"/>
    <property type="evidence" value="ECO:0007669"/>
    <property type="project" value="UniProtKB-UniRule"/>
</dbReference>
<dbReference type="CDD" id="cd01995">
    <property type="entry name" value="QueC-like"/>
    <property type="match status" value="1"/>
</dbReference>
<dbReference type="Gene3D" id="3.40.50.620">
    <property type="entry name" value="HUPs"/>
    <property type="match status" value="1"/>
</dbReference>
<dbReference type="HAMAP" id="MF_01633">
    <property type="entry name" value="QueC"/>
    <property type="match status" value="1"/>
</dbReference>
<dbReference type="InterPro" id="IPR018317">
    <property type="entry name" value="QueC"/>
</dbReference>
<dbReference type="InterPro" id="IPR014729">
    <property type="entry name" value="Rossmann-like_a/b/a_fold"/>
</dbReference>
<dbReference type="NCBIfam" id="TIGR00364">
    <property type="entry name" value="7-cyano-7-deazaguanine synthase QueC"/>
    <property type="match status" value="1"/>
</dbReference>
<dbReference type="PANTHER" id="PTHR42914">
    <property type="entry name" value="7-CYANO-7-DEAZAGUANINE SYNTHASE"/>
    <property type="match status" value="1"/>
</dbReference>
<dbReference type="PANTHER" id="PTHR42914:SF1">
    <property type="entry name" value="7-CYANO-7-DEAZAGUANINE SYNTHASE"/>
    <property type="match status" value="1"/>
</dbReference>
<dbReference type="Pfam" id="PF06508">
    <property type="entry name" value="QueC"/>
    <property type="match status" value="1"/>
</dbReference>
<dbReference type="PIRSF" id="PIRSF006293">
    <property type="entry name" value="ExsB"/>
    <property type="match status" value="1"/>
</dbReference>
<dbReference type="SUPFAM" id="SSF52402">
    <property type="entry name" value="Adenine nucleotide alpha hydrolases-like"/>
    <property type="match status" value="1"/>
</dbReference>